<protein>
    <recommendedName>
        <fullName evidence="1">3-deoxy-manno-octulosonate cytidylyltransferase</fullName>
        <ecNumber evidence="1">2.7.7.38</ecNumber>
    </recommendedName>
    <alternativeName>
        <fullName evidence="1">CMP-2-keto-3-deoxyoctulosonic acid synthase</fullName>
        <shortName evidence="1">CKS</shortName>
        <shortName evidence="1">CMP-KDO synthase</shortName>
    </alternativeName>
</protein>
<evidence type="ECO:0000255" key="1">
    <source>
        <dbReference type="HAMAP-Rule" id="MF_00057"/>
    </source>
</evidence>
<sequence length="248" mass="27730">MNAVIVIPARLSSSRLKEKMLADLEGEPLIVRTWQQATKSRLASRVVVATDSERIFAVLREAGAEVVMTSPDLTCGTDRIAEAAEQVGGDVFVNLQGDEPLIDPATIDLAIAPFFGEGPLPDCTTLVFPLKPDERQIIDDPHVVKAVLDTRGNALYFSRSPIPYRRETLPDTKYYRHIGLYAFRADVLKAFVALPPSMLERAESLEQLRLLENGYRIRCIETTTDTPGVNTEEELEEVRRLFRERFGA</sequence>
<accession>Q8KBF7</accession>
<proteinExistence type="inferred from homology"/>
<dbReference type="EC" id="2.7.7.38" evidence="1"/>
<dbReference type="EMBL" id="AE006470">
    <property type="protein sequence ID" value="AAM73051.1"/>
    <property type="molecule type" value="Genomic_DNA"/>
</dbReference>
<dbReference type="RefSeq" id="NP_662709.1">
    <property type="nucleotide sequence ID" value="NC_002932.3"/>
</dbReference>
<dbReference type="RefSeq" id="WP_010933490.1">
    <property type="nucleotide sequence ID" value="NC_002932.3"/>
</dbReference>
<dbReference type="SMR" id="Q8KBF7"/>
<dbReference type="STRING" id="194439.CT1830"/>
<dbReference type="EnsemblBacteria" id="AAM73051">
    <property type="protein sequence ID" value="AAM73051"/>
    <property type="gene ID" value="CT1830"/>
</dbReference>
<dbReference type="KEGG" id="cte:CT1830"/>
<dbReference type="PATRIC" id="fig|194439.7.peg.1662"/>
<dbReference type="eggNOG" id="COG1212">
    <property type="taxonomic scope" value="Bacteria"/>
</dbReference>
<dbReference type="HOGENOM" id="CLU_065038_0_1_10"/>
<dbReference type="OrthoDB" id="9815559at2"/>
<dbReference type="UniPathway" id="UPA00030"/>
<dbReference type="UniPathway" id="UPA00358">
    <property type="reaction ID" value="UER00476"/>
</dbReference>
<dbReference type="Proteomes" id="UP000001007">
    <property type="component" value="Chromosome"/>
</dbReference>
<dbReference type="GO" id="GO:0005829">
    <property type="term" value="C:cytosol"/>
    <property type="evidence" value="ECO:0007669"/>
    <property type="project" value="TreeGrafter"/>
</dbReference>
<dbReference type="GO" id="GO:0008690">
    <property type="term" value="F:3-deoxy-manno-octulosonate cytidylyltransferase activity"/>
    <property type="evidence" value="ECO:0007669"/>
    <property type="project" value="UniProtKB-UniRule"/>
</dbReference>
<dbReference type="GO" id="GO:0033468">
    <property type="term" value="P:CMP-keto-3-deoxy-D-manno-octulosonic acid biosynthetic process"/>
    <property type="evidence" value="ECO:0007669"/>
    <property type="project" value="UniProtKB-UniRule"/>
</dbReference>
<dbReference type="GO" id="GO:0009103">
    <property type="term" value="P:lipopolysaccharide biosynthetic process"/>
    <property type="evidence" value="ECO:0007669"/>
    <property type="project" value="UniProtKB-UniRule"/>
</dbReference>
<dbReference type="CDD" id="cd02517">
    <property type="entry name" value="CMP-KDO-Synthetase"/>
    <property type="match status" value="1"/>
</dbReference>
<dbReference type="Gene3D" id="3.90.550.10">
    <property type="entry name" value="Spore Coat Polysaccharide Biosynthesis Protein SpsA, Chain A"/>
    <property type="match status" value="1"/>
</dbReference>
<dbReference type="HAMAP" id="MF_00057">
    <property type="entry name" value="KdsB"/>
    <property type="match status" value="1"/>
</dbReference>
<dbReference type="InterPro" id="IPR003329">
    <property type="entry name" value="Cytidylyl_trans"/>
</dbReference>
<dbReference type="InterPro" id="IPR004528">
    <property type="entry name" value="KdsB"/>
</dbReference>
<dbReference type="InterPro" id="IPR029044">
    <property type="entry name" value="Nucleotide-diphossugar_trans"/>
</dbReference>
<dbReference type="NCBIfam" id="TIGR00466">
    <property type="entry name" value="kdsB"/>
    <property type="match status" value="1"/>
</dbReference>
<dbReference type="NCBIfam" id="NF003952">
    <property type="entry name" value="PRK05450.1-5"/>
    <property type="match status" value="1"/>
</dbReference>
<dbReference type="NCBIfam" id="NF009905">
    <property type="entry name" value="PRK13368.1"/>
    <property type="match status" value="1"/>
</dbReference>
<dbReference type="PANTHER" id="PTHR42866">
    <property type="entry name" value="3-DEOXY-MANNO-OCTULOSONATE CYTIDYLYLTRANSFERASE"/>
    <property type="match status" value="1"/>
</dbReference>
<dbReference type="PANTHER" id="PTHR42866:SF2">
    <property type="entry name" value="3-DEOXY-MANNO-OCTULOSONATE CYTIDYLYLTRANSFERASE, MITOCHONDRIAL"/>
    <property type="match status" value="1"/>
</dbReference>
<dbReference type="Pfam" id="PF02348">
    <property type="entry name" value="CTP_transf_3"/>
    <property type="match status" value="1"/>
</dbReference>
<dbReference type="SUPFAM" id="SSF53448">
    <property type="entry name" value="Nucleotide-diphospho-sugar transferases"/>
    <property type="match status" value="1"/>
</dbReference>
<organism>
    <name type="scientific">Chlorobaculum tepidum (strain ATCC 49652 / DSM 12025 / NBRC 103806 / TLS)</name>
    <name type="common">Chlorobium tepidum</name>
    <dbReference type="NCBI Taxonomy" id="194439"/>
    <lineage>
        <taxon>Bacteria</taxon>
        <taxon>Pseudomonadati</taxon>
        <taxon>Chlorobiota</taxon>
        <taxon>Chlorobiia</taxon>
        <taxon>Chlorobiales</taxon>
        <taxon>Chlorobiaceae</taxon>
        <taxon>Chlorobaculum</taxon>
    </lineage>
</organism>
<reference key="1">
    <citation type="journal article" date="2002" name="Proc. Natl. Acad. Sci. U.S.A.">
        <title>The complete genome sequence of Chlorobium tepidum TLS, a photosynthetic, anaerobic, green-sulfur bacterium.</title>
        <authorList>
            <person name="Eisen J.A."/>
            <person name="Nelson K.E."/>
            <person name="Paulsen I.T."/>
            <person name="Heidelberg J.F."/>
            <person name="Wu M."/>
            <person name="Dodson R.J."/>
            <person name="DeBoy R.T."/>
            <person name="Gwinn M.L."/>
            <person name="Nelson W.C."/>
            <person name="Haft D.H."/>
            <person name="Hickey E.K."/>
            <person name="Peterson J.D."/>
            <person name="Durkin A.S."/>
            <person name="Kolonay J.F."/>
            <person name="Yang F."/>
            <person name="Holt I.E."/>
            <person name="Umayam L.A."/>
            <person name="Mason T.M."/>
            <person name="Brenner M."/>
            <person name="Shea T.P."/>
            <person name="Parksey D.S."/>
            <person name="Nierman W.C."/>
            <person name="Feldblyum T.V."/>
            <person name="Hansen C.L."/>
            <person name="Craven M.B."/>
            <person name="Radune D."/>
            <person name="Vamathevan J.J."/>
            <person name="Khouri H.M."/>
            <person name="White O."/>
            <person name="Gruber T.M."/>
            <person name="Ketchum K.A."/>
            <person name="Venter J.C."/>
            <person name="Tettelin H."/>
            <person name="Bryant D.A."/>
            <person name="Fraser C.M."/>
        </authorList>
    </citation>
    <scope>NUCLEOTIDE SEQUENCE [LARGE SCALE GENOMIC DNA]</scope>
    <source>
        <strain>ATCC 49652 / DSM 12025 / NBRC 103806 / TLS</strain>
    </source>
</reference>
<name>KDSB_CHLTE</name>
<gene>
    <name evidence="1" type="primary">kdsB</name>
    <name type="ordered locus">CT1830</name>
</gene>
<feature type="chain" id="PRO_0000370046" description="3-deoxy-manno-octulosonate cytidylyltransferase">
    <location>
        <begin position="1"/>
        <end position="248"/>
    </location>
</feature>
<keyword id="KW-0963">Cytoplasm</keyword>
<keyword id="KW-0448">Lipopolysaccharide biosynthesis</keyword>
<keyword id="KW-0548">Nucleotidyltransferase</keyword>
<keyword id="KW-1185">Reference proteome</keyword>
<keyword id="KW-0808">Transferase</keyword>
<comment type="function">
    <text evidence="1">Activates KDO (a required 8-carbon sugar) for incorporation into bacterial lipopolysaccharide in Gram-negative bacteria.</text>
</comment>
<comment type="catalytic activity">
    <reaction evidence="1">
        <text>3-deoxy-alpha-D-manno-oct-2-ulosonate + CTP = CMP-3-deoxy-beta-D-manno-octulosonate + diphosphate</text>
        <dbReference type="Rhea" id="RHEA:23448"/>
        <dbReference type="ChEBI" id="CHEBI:33019"/>
        <dbReference type="ChEBI" id="CHEBI:37563"/>
        <dbReference type="ChEBI" id="CHEBI:85986"/>
        <dbReference type="ChEBI" id="CHEBI:85987"/>
        <dbReference type="EC" id="2.7.7.38"/>
    </reaction>
</comment>
<comment type="pathway">
    <text evidence="1">Nucleotide-sugar biosynthesis; CMP-3-deoxy-D-manno-octulosonate biosynthesis; CMP-3-deoxy-D-manno-octulosonate from 3-deoxy-D-manno-octulosonate and CTP: step 1/1.</text>
</comment>
<comment type="pathway">
    <text evidence="1">Bacterial outer membrane biogenesis; lipopolysaccharide biosynthesis.</text>
</comment>
<comment type="subcellular location">
    <subcellularLocation>
        <location evidence="1">Cytoplasm</location>
    </subcellularLocation>
</comment>
<comment type="similarity">
    <text evidence="1">Belongs to the KdsB family.</text>
</comment>